<sequence length="277" mass="30532">MKKTQQKEIENVTNITGVRQIELWRRDDLQHPRLDEVAEEVPVALVYNGISHVVMMASPKDLEYFALGFSLSEGIIESPRDIFGMDVVPSCNGLEVQIELSSRRFMGLKERRRALAGRTGCGVCGVEQLNDIGKPVQPLPFTQTFDLNKLDDALRHLNDFQPVGQLTGCTHAAAWMLPSGELVGGHEDVGRHVALDKLLGRRSQEGESWQQGAVLVSSRASYEMVQKSAMCGVEILFAVSAATTLAVEVAERCNLTLVGFCKPGRATVYTHPQRLSN</sequence>
<accession>B7NUB4</accession>
<gene>
    <name evidence="1" type="primary">fdhD</name>
    <name type="ordered locus">ECIAI39_3103</name>
</gene>
<name>FDHD_ECO7I</name>
<comment type="function">
    <text evidence="1">Required for formate dehydrogenase (FDH) activity. Acts as a sulfur carrier protein that transfers sulfur from IscS to the molybdenum cofactor prior to its insertion into FDH.</text>
</comment>
<comment type="subcellular location">
    <subcellularLocation>
        <location evidence="1">Cytoplasm</location>
    </subcellularLocation>
</comment>
<comment type="similarity">
    <text evidence="1">Belongs to the FdhD family.</text>
</comment>
<evidence type="ECO:0000255" key="1">
    <source>
        <dbReference type="HAMAP-Rule" id="MF_00187"/>
    </source>
</evidence>
<keyword id="KW-0963">Cytoplasm</keyword>
<keyword id="KW-0501">Molybdenum cofactor biosynthesis</keyword>
<reference key="1">
    <citation type="journal article" date="2009" name="PLoS Genet.">
        <title>Organised genome dynamics in the Escherichia coli species results in highly diverse adaptive paths.</title>
        <authorList>
            <person name="Touchon M."/>
            <person name="Hoede C."/>
            <person name="Tenaillon O."/>
            <person name="Barbe V."/>
            <person name="Baeriswyl S."/>
            <person name="Bidet P."/>
            <person name="Bingen E."/>
            <person name="Bonacorsi S."/>
            <person name="Bouchier C."/>
            <person name="Bouvet O."/>
            <person name="Calteau A."/>
            <person name="Chiapello H."/>
            <person name="Clermont O."/>
            <person name="Cruveiller S."/>
            <person name="Danchin A."/>
            <person name="Diard M."/>
            <person name="Dossat C."/>
            <person name="Karoui M.E."/>
            <person name="Frapy E."/>
            <person name="Garry L."/>
            <person name="Ghigo J.M."/>
            <person name="Gilles A.M."/>
            <person name="Johnson J."/>
            <person name="Le Bouguenec C."/>
            <person name="Lescat M."/>
            <person name="Mangenot S."/>
            <person name="Martinez-Jehanne V."/>
            <person name="Matic I."/>
            <person name="Nassif X."/>
            <person name="Oztas S."/>
            <person name="Petit M.A."/>
            <person name="Pichon C."/>
            <person name="Rouy Z."/>
            <person name="Ruf C.S."/>
            <person name="Schneider D."/>
            <person name="Tourret J."/>
            <person name="Vacherie B."/>
            <person name="Vallenet D."/>
            <person name="Medigue C."/>
            <person name="Rocha E.P.C."/>
            <person name="Denamur E."/>
        </authorList>
    </citation>
    <scope>NUCLEOTIDE SEQUENCE [LARGE SCALE GENOMIC DNA]</scope>
    <source>
        <strain>IAI39 / ExPEC</strain>
    </source>
</reference>
<feature type="chain" id="PRO_1000118558" description="Sulfur carrier protein FdhD">
    <location>
        <begin position="1"/>
        <end position="277"/>
    </location>
</feature>
<feature type="active site" description="Cysteine persulfide intermediate" evidence="1">
    <location>
        <position position="121"/>
    </location>
</feature>
<feature type="binding site" evidence="1">
    <location>
        <begin position="260"/>
        <end position="265"/>
    </location>
    <ligand>
        <name>Mo-bis(molybdopterin guanine dinucleotide)</name>
        <dbReference type="ChEBI" id="CHEBI:60539"/>
    </ligand>
</feature>
<dbReference type="EMBL" id="CU928164">
    <property type="protein sequence ID" value="CAR19222.1"/>
    <property type="molecule type" value="Genomic_DNA"/>
</dbReference>
<dbReference type="RefSeq" id="WP_000753589.1">
    <property type="nucleotide sequence ID" value="NC_011750.1"/>
</dbReference>
<dbReference type="RefSeq" id="YP_002409033.1">
    <property type="nucleotide sequence ID" value="NC_011750.1"/>
</dbReference>
<dbReference type="SMR" id="B7NUB4"/>
<dbReference type="STRING" id="585057.ECIAI39_3103"/>
<dbReference type="GeneID" id="75174135"/>
<dbReference type="KEGG" id="ect:ECIAI39_3103"/>
<dbReference type="PATRIC" id="fig|585057.6.peg.3218"/>
<dbReference type="HOGENOM" id="CLU_056887_2_0_6"/>
<dbReference type="Proteomes" id="UP000000749">
    <property type="component" value="Chromosome"/>
</dbReference>
<dbReference type="GO" id="GO:0005737">
    <property type="term" value="C:cytoplasm"/>
    <property type="evidence" value="ECO:0007669"/>
    <property type="project" value="UniProtKB-SubCell"/>
</dbReference>
<dbReference type="GO" id="GO:0097163">
    <property type="term" value="F:sulfur carrier activity"/>
    <property type="evidence" value="ECO:0007669"/>
    <property type="project" value="UniProtKB-UniRule"/>
</dbReference>
<dbReference type="GO" id="GO:0016783">
    <property type="term" value="F:sulfurtransferase activity"/>
    <property type="evidence" value="ECO:0007669"/>
    <property type="project" value="InterPro"/>
</dbReference>
<dbReference type="GO" id="GO:0006777">
    <property type="term" value="P:Mo-molybdopterin cofactor biosynthetic process"/>
    <property type="evidence" value="ECO:0007669"/>
    <property type="project" value="UniProtKB-UniRule"/>
</dbReference>
<dbReference type="FunFam" id="3.10.20.10:FF:000003">
    <property type="entry name" value="Sulfur carrier protein FdhD"/>
    <property type="match status" value="1"/>
</dbReference>
<dbReference type="FunFam" id="3.40.140.10:FF:000027">
    <property type="entry name" value="Sulfur carrier protein FdhD"/>
    <property type="match status" value="1"/>
</dbReference>
<dbReference type="Gene3D" id="3.10.20.10">
    <property type="match status" value="1"/>
</dbReference>
<dbReference type="Gene3D" id="3.40.140.10">
    <property type="entry name" value="Cytidine Deaminase, domain 2"/>
    <property type="match status" value="1"/>
</dbReference>
<dbReference type="HAMAP" id="MF_00187">
    <property type="entry name" value="FdhD"/>
    <property type="match status" value="1"/>
</dbReference>
<dbReference type="InterPro" id="IPR016193">
    <property type="entry name" value="Cytidine_deaminase-like"/>
</dbReference>
<dbReference type="InterPro" id="IPR003786">
    <property type="entry name" value="FdhD"/>
</dbReference>
<dbReference type="NCBIfam" id="TIGR00129">
    <property type="entry name" value="fdhD_narQ"/>
    <property type="match status" value="1"/>
</dbReference>
<dbReference type="PANTHER" id="PTHR30592">
    <property type="entry name" value="FORMATE DEHYDROGENASE"/>
    <property type="match status" value="1"/>
</dbReference>
<dbReference type="PANTHER" id="PTHR30592:SF1">
    <property type="entry name" value="SULFUR CARRIER PROTEIN FDHD"/>
    <property type="match status" value="1"/>
</dbReference>
<dbReference type="Pfam" id="PF02634">
    <property type="entry name" value="FdhD-NarQ"/>
    <property type="match status" value="1"/>
</dbReference>
<dbReference type="PIRSF" id="PIRSF015626">
    <property type="entry name" value="FdhD"/>
    <property type="match status" value="1"/>
</dbReference>
<dbReference type="SUPFAM" id="SSF53927">
    <property type="entry name" value="Cytidine deaminase-like"/>
    <property type="match status" value="1"/>
</dbReference>
<organism>
    <name type="scientific">Escherichia coli O7:K1 (strain IAI39 / ExPEC)</name>
    <dbReference type="NCBI Taxonomy" id="585057"/>
    <lineage>
        <taxon>Bacteria</taxon>
        <taxon>Pseudomonadati</taxon>
        <taxon>Pseudomonadota</taxon>
        <taxon>Gammaproteobacteria</taxon>
        <taxon>Enterobacterales</taxon>
        <taxon>Enterobacteriaceae</taxon>
        <taxon>Escherichia</taxon>
    </lineage>
</organism>
<proteinExistence type="inferred from homology"/>
<protein>
    <recommendedName>
        <fullName evidence="1">Sulfur carrier protein FdhD</fullName>
    </recommendedName>
</protein>